<keyword id="KW-0106">Calcium</keyword>
<keyword id="KW-0256">Endoplasmic reticulum</keyword>
<keyword id="KW-0333">Golgi apparatus</keyword>
<keyword id="KW-0479">Metal-binding</keyword>
<keyword id="KW-1185">Reference proteome</keyword>
<keyword id="KW-0732">Signal</keyword>
<protein>
    <recommendedName>
        <fullName>Uncharacterized calcium-binding protein C613.03</fullName>
    </recommendedName>
</protein>
<accession>O74903</accession>
<name>YCS3_SCHPO</name>
<reference key="1">
    <citation type="journal article" date="2002" name="Nature">
        <title>The genome sequence of Schizosaccharomyces pombe.</title>
        <authorList>
            <person name="Wood V."/>
            <person name="Gwilliam R."/>
            <person name="Rajandream M.A."/>
            <person name="Lyne M.H."/>
            <person name="Lyne R."/>
            <person name="Stewart A."/>
            <person name="Sgouros J.G."/>
            <person name="Peat N."/>
            <person name="Hayles J."/>
            <person name="Baker S.G."/>
            <person name="Basham D."/>
            <person name="Bowman S."/>
            <person name="Brooks K."/>
            <person name="Brown D."/>
            <person name="Brown S."/>
            <person name="Chillingworth T."/>
            <person name="Churcher C.M."/>
            <person name="Collins M."/>
            <person name="Connor R."/>
            <person name="Cronin A."/>
            <person name="Davis P."/>
            <person name="Feltwell T."/>
            <person name="Fraser A."/>
            <person name="Gentles S."/>
            <person name="Goble A."/>
            <person name="Hamlin N."/>
            <person name="Harris D.E."/>
            <person name="Hidalgo J."/>
            <person name="Hodgson G."/>
            <person name="Holroyd S."/>
            <person name="Hornsby T."/>
            <person name="Howarth S."/>
            <person name="Huckle E.J."/>
            <person name="Hunt S."/>
            <person name="Jagels K."/>
            <person name="James K.D."/>
            <person name="Jones L."/>
            <person name="Jones M."/>
            <person name="Leather S."/>
            <person name="McDonald S."/>
            <person name="McLean J."/>
            <person name="Mooney P."/>
            <person name="Moule S."/>
            <person name="Mungall K.L."/>
            <person name="Murphy L.D."/>
            <person name="Niblett D."/>
            <person name="Odell C."/>
            <person name="Oliver K."/>
            <person name="O'Neil S."/>
            <person name="Pearson D."/>
            <person name="Quail M.A."/>
            <person name="Rabbinowitsch E."/>
            <person name="Rutherford K.M."/>
            <person name="Rutter S."/>
            <person name="Saunders D."/>
            <person name="Seeger K."/>
            <person name="Sharp S."/>
            <person name="Skelton J."/>
            <person name="Simmonds M.N."/>
            <person name="Squares R."/>
            <person name="Squares S."/>
            <person name="Stevens K."/>
            <person name="Taylor K."/>
            <person name="Taylor R.G."/>
            <person name="Tivey A."/>
            <person name="Walsh S.V."/>
            <person name="Warren T."/>
            <person name="Whitehead S."/>
            <person name="Woodward J.R."/>
            <person name="Volckaert G."/>
            <person name="Aert R."/>
            <person name="Robben J."/>
            <person name="Grymonprez B."/>
            <person name="Weltjens I."/>
            <person name="Vanstreels E."/>
            <person name="Rieger M."/>
            <person name="Schaefer M."/>
            <person name="Mueller-Auer S."/>
            <person name="Gabel C."/>
            <person name="Fuchs M."/>
            <person name="Duesterhoeft A."/>
            <person name="Fritzc C."/>
            <person name="Holzer E."/>
            <person name="Moestl D."/>
            <person name="Hilbert H."/>
            <person name="Borzym K."/>
            <person name="Langer I."/>
            <person name="Beck A."/>
            <person name="Lehrach H."/>
            <person name="Reinhardt R."/>
            <person name="Pohl T.M."/>
            <person name="Eger P."/>
            <person name="Zimmermann W."/>
            <person name="Wedler H."/>
            <person name="Wambutt R."/>
            <person name="Purnelle B."/>
            <person name="Goffeau A."/>
            <person name="Cadieu E."/>
            <person name="Dreano S."/>
            <person name="Gloux S."/>
            <person name="Lelaure V."/>
            <person name="Mottier S."/>
            <person name="Galibert F."/>
            <person name="Aves S.J."/>
            <person name="Xiang Z."/>
            <person name="Hunt C."/>
            <person name="Moore K."/>
            <person name="Hurst S.M."/>
            <person name="Lucas M."/>
            <person name="Rochet M."/>
            <person name="Gaillardin C."/>
            <person name="Tallada V.A."/>
            <person name="Garzon A."/>
            <person name="Thode G."/>
            <person name="Daga R.R."/>
            <person name="Cruzado L."/>
            <person name="Jimenez J."/>
            <person name="Sanchez M."/>
            <person name="del Rey F."/>
            <person name="Benito J."/>
            <person name="Dominguez A."/>
            <person name="Revuelta J.L."/>
            <person name="Moreno S."/>
            <person name="Armstrong J."/>
            <person name="Forsburg S.L."/>
            <person name="Cerutti L."/>
            <person name="Lowe T."/>
            <person name="McCombie W.R."/>
            <person name="Paulsen I."/>
            <person name="Potashkin J."/>
            <person name="Shpakovski G.V."/>
            <person name="Ussery D."/>
            <person name="Barrell B.G."/>
            <person name="Nurse P."/>
        </authorList>
    </citation>
    <scope>NUCLEOTIDE SEQUENCE [LARGE SCALE GENOMIC DNA]</scope>
    <source>
        <strain>972 / ATCC 24843</strain>
    </source>
</reference>
<reference key="2">
    <citation type="journal article" date="2006" name="Nat. Biotechnol.">
        <title>ORFeome cloning and global analysis of protein localization in the fission yeast Schizosaccharomyces pombe.</title>
        <authorList>
            <person name="Matsuyama A."/>
            <person name="Arai R."/>
            <person name="Yashiroda Y."/>
            <person name="Shirai A."/>
            <person name="Kamata A."/>
            <person name="Sekido S."/>
            <person name="Kobayashi Y."/>
            <person name="Hashimoto A."/>
            <person name="Hamamoto M."/>
            <person name="Hiraoka Y."/>
            <person name="Horinouchi S."/>
            <person name="Yoshida M."/>
        </authorList>
    </citation>
    <scope>SUBCELLULAR LOCATION [LARGE SCALE ANALYSIS]</scope>
</reference>
<sequence length="189" mass="22475">MKFSTVGFLFSTILFKSAFAGWMDTHMKDEHHIDKYTDESFFRLHDLGKKGYWSDQDILSLYGLFENDEVPFVKKNEVLVDVLKKCDPSGNRRITLDEFLAFRKNGGELTDFGFPGHHGDEEEEFEMHHVEKYHPAGLDEPDENWNHPEDIEHFQKHDEIFHGDKKPEERRKHFVKYNNIPDKYRRVSI</sequence>
<proteinExistence type="inferred from homology"/>
<gene>
    <name type="ORF">SPCC613.03</name>
</gene>
<organism>
    <name type="scientific">Schizosaccharomyces pombe (strain 972 / ATCC 24843)</name>
    <name type="common">Fission yeast</name>
    <dbReference type="NCBI Taxonomy" id="284812"/>
    <lineage>
        <taxon>Eukaryota</taxon>
        <taxon>Fungi</taxon>
        <taxon>Dikarya</taxon>
        <taxon>Ascomycota</taxon>
        <taxon>Taphrinomycotina</taxon>
        <taxon>Schizosaccharomycetes</taxon>
        <taxon>Schizosaccharomycetales</taxon>
        <taxon>Schizosaccharomycetaceae</taxon>
        <taxon>Schizosaccharomyces</taxon>
    </lineage>
</organism>
<comment type="subcellular location">
    <subcellularLocation>
        <location evidence="3">Endoplasmic reticulum lumen</location>
    </subcellularLocation>
    <subcellularLocation>
        <location evidence="3">Golgi apparatus lumen</location>
    </subcellularLocation>
</comment>
<dbReference type="EMBL" id="CU329672">
    <property type="protein sequence ID" value="CAA21055.1"/>
    <property type="molecule type" value="Genomic_DNA"/>
</dbReference>
<dbReference type="PIR" id="T41469">
    <property type="entry name" value="T41469"/>
</dbReference>
<dbReference type="RefSeq" id="NP_587691.1">
    <property type="nucleotide sequence ID" value="NM_001022686.2"/>
</dbReference>
<dbReference type="SMR" id="O74903"/>
<dbReference type="BioGRID" id="275967">
    <property type="interactions" value="19"/>
</dbReference>
<dbReference type="FunCoup" id="O74903">
    <property type="interactions" value="140"/>
</dbReference>
<dbReference type="IntAct" id="O74903">
    <property type="interactions" value="1"/>
</dbReference>
<dbReference type="STRING" id="284812.O74903"/>
<dbReference type="PaxDb" id="4896-SPCC613.03.1"/>
<dbReference type="EnsemblFungi" id="SPCC613.03.1">
    <property type="protein sequence ID" value="SPCC613.03.1:pep"/>
    <property type="gene ID" value="SPCC613.03"/>
</dbReference>
<dbReference type="KEGG" id="spo:2539402"/>
<dbReference type="PomBase" id="SPCC613.03"/>
<dbReference type="VEuPathDB" id="FungiDB:SPCC613.03"/>
<dbReference type="eggNOG" id="ENOG502QRFY">
    <property type="taxonomic scope" value="Eukaryota"/>
</dbReference>
<dbReference type="HOGENOM" id="CLU_096561_0_0_1"/>
<dbReference type="InParanoid" id="O74903"/>
<dbReference type="OMA" id="ADWMTKH"/>
<dbReference type="PhylomeDB" id="O74903"/>
<dbReference type="PRO" id="PR:O74903"/>
<dbReference type="Proteomes" id="UP000002485">
    <property type="component" value="Chromosome III"/>
</dbReference>
<dbReference type="GO" id="GO:0005783">
    <property type="term" value="C:endoplasmic reticulum"/>
    <property type="evidence" value="ECO:0007005"/>
    <property type="project" value="PomBase"/>
</dbReference>
<dbReference type="GO" id="GO:0005788">
    <property type="term" value="C:endoplasmic reticulum lumen"/>
    <property type="evidence" value="ECO:0007669"/>
    <property type="project" value="UniProtKB-SubCell"/>
</dbReference>
<dbReference type="GO" id="GO:0005793">
    <property type="term" value="C:endoplasmic reticulum-Golgi intermediate compartment"/>
    <property type="evidence" value="ECO:0000318"/>
    <property type="project" value="GO_Central"/>
</dbReference>
<dbReference type="GO" id="GO:0005794">
    <property type="term" value="C:Golgi apparatus"/>
    <property type="evidence" value="ECO:0007005"/>
    <property type="project" value="PomBase"/>
</dbReference>
<dbReference type="GO" id="GO:0005796">
    <property type="term" value="C:Golgi lumen"/>
    <property type="evidence" value="ECO:0007669"/>
    <property type="project" value="UniProtKB-SubCell"/>
</dbReference>
<dbReference type="GO" id="GO:0005509">
    <property type="term" value="F:calcium ion binding"/>
    <property type="evidence" value="ECO:0000318"/>
    <property type="project" value="GO_Central"/>
</dbReference>
<dbReference type="InterPro" id="IPR011992">
    <property type="entry name" value="EF-hand-dom_pair"/>
</dbReference>
<dbReference type="InterPro" id="IPR018247">
    <property type="entry name" value="EF_Hand_1_Ca_BS"/>
</dbReference>
<dbReference type="InterPro" id="IPR002048">
    <property type="entry name" value="EF_hand_dom"/>
</dbReference>
<dbReference type="InterPro" id="IPR040250">
    <property type="entry name" value="Nucleobindin"/>
</dbReference>
<dbReference type="PANTHER" id="PTHR19237">
    <property type="entry name" value="NUCLEOBINDIN"/>
    <property type="match status" value="1"/>
</dbReference>
<dbReference type="PANTHER" id="PTHR19237:SF20">
    <property type="entry name" value="NUCLEOBINDIN 1"/>
    <property type="match status" value="1"/>
</dbReference>
<dbReference type="SUPFAM" id="SSF47473">
    <property type="entry name" value="EF-hand"/>
    <property type="match status" value="1"/>
</dbReference>
<dbReference type="PROSITE" id="PS00018">
    <property type="entry name" value="EF_HAND_1"/>
    <property type="match status" value="1"/>
</dbReference>
<dbReference type="PROSITE" id="PS50222">
    <property type="entry name" value="EF_HAND_2"/>
    <property type="match status" value="1"/>
</dbReference>
<evidence type="ECO:0000255" key="1"/>
<evidence type="ECO:0000255" key="2">
    <source>
        <dbReference type="PROSITE-ProRule" id="PRU00448"/>
    </source>
</evidence>
<evidence type="ECO:0000269" key="3">
    <source>
    </source>
</evidence>
<feature type="signal peptide" evidence="1">
    <location>
        <begin position="1"/>
        <end position="20"/>
    </location>
</feature>
<feature type="chain" id="PRO_0000372333" description="Uncharacterized calcium-binding protein C613.03">
    <location>
        <begin position="21"/>
        <end position="189"/>
    </location>
</feature>
<feature type="domain" description="EF-hand" evidence="2">
    <location>
        <begin position="74"/>
        <end position="109"/>
    </location>
</feature>
<feature type="binding site" evidence="2">
    <location>
        <position position="87"/>
    </location>
    <ligand>
        <name>Ca(2+)</name>
        <dbReference type="ChEBI" id="CHEBI:29108"/>
    </ligand>
</feature>
<feature type="binding site" evidence="2">
    <location>
        <position position="89"/>
    </location>
    <ligand>
        <name>Ca(2+)</name>
        <dbReference type="ChEBI" id="CHEBI:29108"/>
    </ligand>
</feature>
<feature type="binding site" evidence="2">
    <location>
        <position position="91"/>
    </location>
    <ligand>
        <name>Ca(2+)</name>
        <dbReference type="ChEBI" id="CHEBI:29108"/>
    </ligand>
</feature>
<feature type="binding site" evidence="2">
    <location>
        <position position="93"/>
    </location>
    <ligand>
        <name>Ca(2+)</name>
        <dbReference type="ChEBI" id="CHEBI:29108"/>
    </ligand>
</feature>
<feature type="binding site" evidence="2">
    <location>
        <position position="98"/>
    </location>
    <ligand>
        <name>Ca(2+)</name>
        <dbReference type="ChEBI" id="CHEBI:29108"/>
    </ligand>
</feature>